<protein>
    <recommendedName>
        <fullName evidence="1">Proteasome-associated ATPase</fullName>
    </recommendedName>
    <alternativeName>
        <fullName evidence="1">AAA ATPase forming ring-shaped complexes</fullName>
        <shortName evidence="1">ARC</shortName>
    </alternativeName>
    <alternativeName>
        <fullName evidence="1">Proteasomal ATPase</fullName>
    </alternativeName>
</protein>
<evidence type="ECO:0000255" key="1">
    <source>
        <dbReference type="HAMAP-Rule" id="MF_02112"/>
    </source>
</evidence>
<evidence type="ECO:0000256" key="2">
    <source>
        <dbReference type="SAM" id="MobiDB-lite"/>
    </source>
</evidence>
<comment type="function">
    <text evidence="1">ATPase which is responsible for recognizing, binding, unfolding and translocation of pupylated proteins into the bacterial 20S proteasome core particle. May be essential for opening the gate of the 20S proteasome via an interaction with its C-terminus, thereby allowing substrate entry and access to the site of proteolysis. Thus, the C-termini of the proteasomal ATPase may function like a 'key in a lock' to induce gate opening and therefore regulate proteolysis.</text>
</comment>
<comment type="pathway">
    <text evidence="1">Protein degradation; proteasomal Pup-dependent pathway.</text>
</comment>
<comment type="subunit">
    <text evidence="1">Homohexamer. Assembles into a hexameric ring structure that caps the 20S proteasome core. Strongly interacts with the prokaryotic ubiquitin-like protein Pup through a hydrophobic interface; the interacting region of ARC lies in its N-terminal coiled-coil domain. There is one Pup binding site per ARC hexamer ring. Upon ATP-binding, the C-terminus of ARC interacts with the alpha-rings of the proteasome core, possibly by binding to the intersubunit pockets.</text>
</comment>
<comment type="domain">
    <text evidence="1">Consists of three main regions, an N-terminal coiled-coil domain that binds to protein Pup and functions as a docking station, an interdomain involved in ARC hexamerization, and a C-terminal ATPase domain of the AAA type.</text>
</comment>
<comment type="similarity">
    <text evidence="1">Belongs to the AAA ATPase family.</text>
</comment>
<accession>Q2J9Q0</accession>
<reference key="1">
    <citation type="journal article" date="2007" name="Genome Res.">
        <title>Genome characteristics of facultatively symbiotic Frankia sp. strains reflect host range and host plant biogeography.</title>
        <authorList>
            <person name="Normand P."/>
            <person name="Lapierre P."/>
            <person name="Tisa L.S."/>
            <person name="Gogarten J.P."/>
            <person name="Alloisio N."/>
            <person name="Bagnarol E."/>
            <person name="Bassi C.A."/>
            <person name="Berry A.M."/>
            <person name="Bickhart D.M."/>
            <person name="Choisne N."/>
            <person name="Couloux A."/>
            <person name="Cournoyer B."/>
            <person name="Cruveiller S."/>
            <person name="Daubin V."/>
            <person name="Demange N."/>
            <person name="Francino M.P."/>
            <person name="Goltsman E."/>
            <person name="Huang Y."/>
            <person name="Kopp O.R."/>
            <person name="Labarre L."/>
            <person name="Lapidus A."/>
            <person name="Lavire C."/>
            <person name="Marechal J."/>
            <person name="Martinez M."/>
            <person name="Mastronunzio J.E."/>
            <person name="Mullin B.C."/>
            <person name="Niemann J."/>
            <person name="Pujic P."/>
            <person name="Rawnsley T."/>
            <person name="Rouy Z."/>
            <person name="Schenowitz C."/>
            <person name="Sellstedt A."/>
            <person name="Tavares F."/>
            <person name="Tomkins J.P."/>
            <person name="Vallenet D."/>
            <person name="Valverde C."/>
            <person name="Wall L.G."/>
            <person name="Wang Y."/>
            <person name="Medigue C."/>
            <person name="Benson D.R."/>
        </authorList>
    </citation>
    <scope>NUCLEOTIDE SEQUENCE [LARGE SCALE GENOMIC DNA]</scope>
    <source>
        <strain>DSM 45818 / CECT 9043 / HFP020203 / CcI3</strain>
    </source>
</reference>
<dbReference type="EMBL" id="CP000249">
    <property type="protein sequence ID" value="ABD11992.1"/>
    <property type="molecule type" value="Genomic_DNA"/>
</dbReference>
<dbReference type="RefSeq" id="WP_011437027.1">
    <property type="nucleotide sequence ID" value="NZ_JENI01000015.1"/>
</dbReference>
<dbReference type="SMR" id="Q2J9Q0"/>
<dbReference type="STRING" id="106370.Francci3_2630"/>
<dbReference type="KEGG" id="fra:Francci3_2630"/>
<dbReference type="eggNOG" id="COG1222">
    <property type="taxonomic scope" value="Bacteria"/>
</dbReference>
<dbReference type="HOGENOM" id="CLU_036054_0_0_11"/>
<dbReference type="OrthoDB" id="9809379at2"/>
<dbReference type="PhylomeDB" id="Q2J9Q0"/>
<dbReference type="UniPathway" id="UPA00997"/>
<dbReference type="Proteomes" id="UP000001937">
    <property type="component" value="Chromosome"/>
</dbReference>
<dbReference type="GO" id="GO:0000502">
    <property type="term" value="C:proteasome complex"/>
    <property type="evidence" value="ECO:0007669"/>
    <property type="project" value="UniProtKB-KW"/>
</dbReference>
<dbReference type="GO" id="GO:0005524">
    <property type="term" value="F:ATP binding"/>
    <property type="evidence" value="ECO:0007669"/>
    <property type="project" value="UniProtKB-UniRule"/>
</dbReference>
<dbReference type="GO" id="GO:0016887">
    <property type="term" value="F:ATP hydrolysis activity"/>
    <property type="evidence" value="ECO:0007669"/>
    <property type="project" value="UniProtKB-UniRule"/>
</dbReference>
<dbReference type="GO" id="GO:0019941">
    <property type="term" value="P:modification-dependent protein catabolic process"/>
    <property type="evidence" value="ECO:0007669"/>
    <property type="project" value="InterPro"/>
</dbReference>
<dbReference type="GO" id="GO:0010498">
    <property type="term" value="P:proteasomal protein catabolic process"/>
    <property type="evidence" value="ECO:0007669"/>
    <property type="project" value="InterPro"/>
</dbReference>
<dbReference type="FunFam" id="3.40.50.300:FF:001025">
    <property type="entry name" value="ATPase family, AAA domain-containing 2B"/>
    <property type="match status" value="1"/>
</dbReference>
<dbReference type="Gene3D" id="1.10.8.60">
    <property type="match status" value="1"/>
</dbReference>
<dbReference type="Gene3D" id="1.20.5.170">
    <property type="match status" value="1"/>
</dbReference>
<dbReference type="Gene3D" id="2.40.50.140">
    <property type="entry name" value="Nucleic acid-binding proteins"/>
    <property type="match status" value="2"/>
</dbReference>
<dbReference type="Gene3D" id="3.40.50.300">
    <property type="entry name" value="P-loop containing nucleotide triphosphate hydrolases"/>
    <property type="match status" value="1"/>
</dbReference>
<dbReference type="HAMAP" id="MF_02112">
    <property type="entry name" value="ARC_ATPase"/>
    <property type="match status" value="1"/>
</dbReference>
<dbReference type="InterPro" id="IPR003593">
    <property type="entry name" value="AAA+_ATPase"/>
</dbReference>
<dbReference type="InterPro" id="IPR050168">
    <property type="entry name" value="AAA_ATPase_domain"/>
</dbReference>
<dbReference type="InterPro" id="IPR003959">
    <property type="entry name" value="ATPase_AAA_core"/>
</dbReference>
<dbReference type="InterPro" id="IPR003960">
    <property type="entry name" value="ATPase_AAA_CS"/>
</dbReference>
<dbReference type="InterPro" id="IPR012340">
    <property type="entry name" value="NA-bd_OB-fold"/>
</dbReference>
<dbReference type="InterPro" id="IPR027417">
    <property type="entry name" value="P-loop_NTPase"/>
</dbReference>
<dbReference type="InterPro" id="IPR032501">
    <property type="entry name" value="Prot_ATP_ID_OB_2nd"/>
</dbReference>
<dbReference type="InterPro" id="IPR041626">
    <property type="entry name" value="Prot_ATP_ID_OB_N"/>
</dbReference>
<dbReference type="InterPro" id="IPR022482">
    <property type="entry name" value="Proteasome_ATPase"/>
</dbReference>
<dbReference type="NCBIfam" id="TIGR03689">
    <property type="entry name" value="pup_AAA"/>
    <property type="match status" value="1"/>
</dbReference>
<dbReference type="PANTHER" id="PTHR23077">
    <property type="entry name" value="AAA-FAMILY ATPASE"/>
    <property type="match status" value="1"/>
</dbReference>
<dbReference type="PANTHER" id="PTHR23077:SF144">
    <property type="entry name" value="PROTEASOME-ASSOCIATED ATPASE"/>
    <property type="match status" value="1"/>
</dbReference>
<dbReference type="Pfam" id="PF00004">
    <property type="entry name" value="AAA"/>
    <property type="match status" value="1"/>
</dbReference>
<dbReference type="Pfam" id="PF16450">
    <property type="entry name" value="Prot_ATP_ID_OB_C"/>
    <property type="match status" value="1"/>
</dbReference>
<dbReference type="Pfam" id="PF17758">
    <property type="entry name" value="Prot_ATP_ID_OB_N"/>
    <property type="match status" value="1"/>
</dbReference>
<dbReference type="SMART" id="SM00382">
    <property type="entry name" value="AAA"/>
    <property type="match status" value="1"/>
</dbReference>
<dbReference type="SUPFAM" id="SSF52540">
    <property type="entry name" value="P-loop containing nucleoside triphosphate hydrolases"/>
    <property type="match status" value="1"/>
</dbReference>
<dbReference type="PROSITE" id="PS00674">
    <property type="entry name" value="AAA"/>
    <property type="match status" value="1"/>
</dbReference>
<feature type="chain" id="PRO_0000396983" description="Proteasome-associated ATPase">
    <location>
        <begin position="1"/>
        <end position="602"/>
    </location>
</feature>
<feature type="region of interest" description="Disordered" evidence="2">
    <location>
        <begin position="1"/>
        <end position="31"/>
    </location>
</feature>
<feature type="region of interest" description="Docks into pockets in the proteasome alpha-ring" evidence="1">
    <location>
        <begin position="601"/>
        <end position="602"/>
    </location>
</feature>
<feature type="coiled-coil region" evidence="1">
    <location>
        <begin position="19"/>
        <end position="106"/>
    </location>
</feature>
<feature type="compositionally biased region" description="Low complexity" evidence="2">
    <location>
        <begin position="1"/>
        <end position="17"/>
    </location>
</feature>
<feature type="compositionally biased region" description="Basic and acidic residues" evidence="2">
    <location>
        <begin position="18"/>
        <end position="31"/>
    </location>
</feature>
<feature type="binding site" evidence="1">
    <location>
        <begin position="289"/>
        <end position="294"/>
    </location>
    <ligand>
        <name>ATP</name>
        <dbReference type="ChEBI" id="CHEBI:30616"/>
    </ligand>
</feature>
<keyword id="KW-0067">ATP-binding</keyword>
<keyword id="KW-0143">Chaperone</keyword>
<keyword id="KW-0175">Coiled coil</keyword>
<keyword id="KW-0547">Nucleotide-binding</keyword>
<keyword id="KW-0647">Proteasome</keyword>
<keyword id="KW-1185">Reference proteome</keyword>
<sequence length="602" mass="66828">MSGPRSGSGSDGSTGRPGDAESRRSAYEKETHELTTQVAFLEEEVAMLRRKLSESPRQLRVLEERLAEIQAELSAVTGQNDRLVATLREARDQIVTLKEEVDRLAQPPSGYGIFVSSYEDGTVDVFTQGRKLRVTVSPSVNISDLLPGQEVMLNEALNVVETRAFERQGEIVLLKEVLEGGDRALVLGHTDEERVVMLAQPLLDGPIRSGDSLLIESRSGYAFERIPKSEVEELVLEEVPDIGYEQIGGLKSQIESIRDSVELPFLYKELYREHQLKPPKGVLLYGPPGCGKTLIAKAVANSLAKKVEAKTGGQGTGRAFFLNIKGPELLNKFVGETERQIRLVFQRAREKASEGMPVIVFFDEMDSIFRTRGSGVSSDVENTIVPQLLSEIDGVEQLENVIVIGASNREDMIDPAILRPGRLDVKIKVERPDAEAARDIFAKYVVPELPLYPDDLAEFGGNREATVQAMIQRVVERMYAESEENRFLEVTYANGDKEVLYFKDFNSGAMIENIVARAKKMAVKEHIEGGQKGLRMQYLLAACMDEFKENEDLPNTTNPDDWARISGKKGERIVYIRTLVTGTKGTEAGRSIDTIANTGQYL</sequence>
<organism>
    <name type="scientific">Frankia casuarinae (strain DSM 45818 / CECT 9043 / HFP020203 / CcI3)</name>
    <dbReference type="NCBI Taxonomy" id="106370"/>
    <lineage>
        <taxon>Bacteria</taxon>
        <taxon>Bacillati</taxon>
        <taxon>Actinomycetota</taxon>
        <taxon>Actinomycetes</taxon>
        <taxon>Frankiales</taxon>
        <taxon>Frankiaceae</taxon>
        <taxon>Frankia</taxon>
    </lineage>
</organism>
<name>ARC_FRACC</name>
<gene>
    <name evidence="1" type="primary">arc</name>
    <name type="ordered locus">Francci3_2630</name>
</gene>
<proteinExistence type="inferred from homology"/>